<keyword id="KW-0067">ATP-binding</keyword>
<keyword id="KW-0173">Coenzyme A biosynthesis</keyword>
<keyword id="KW-0963">Cytoplasm</keyword>
<keyword id="KW-0418">Kinase</keyword>
<keyword id="KW-0479">Metal-binding</keyword>
<keyword id="KW-0547">Nucleotide-binding</keyword>
<keyword id="KW-0630">Potassium</keyword>
<keyword id="KW-1185">Reference proteome</keyword>
<keyword id="KW-0808">Transferase</keyword>
<evidence type="ECO:0000255" key="1">
    <source>
        <dbReference type="HAMAP-Rule" id="MF_01274"/>
    </source>
</evidence>
<proteinExistence type="inferred from homology"/>
<feature type="chain" id="PRO_1000214195" description="Type III pantothenate kinase">
    <location>
        <begin position="1"/>
        <end position="249"/>
    </location>
</feature>
<feature type="active site" description="Proton acceptor" evidence="1">
    <location>
        <position position="100"/>
    </location>
</feature>
<feature type="binding site" evidence="1">
    <location>
        <begin position="6"/>
        <end position="13"/>
    </location>
    <ligand>
        <name>ATP</name>
        <dbReference type="ChEBI" id="CHEBI:30616"/>
    </ligand>
</feature>
<feature type="binding site" evidence="1">
    <location>
        <position position="77"/>
    </location>
    <ligand>
        <name>substrate</name>
    </ligand>
</feature>
<feature type="binding site" evidence="1">
    <location>
        <begin position="98"/>
        <end position="101"/>
    </location>
    <ligand>
        <name>substrate</name>
    </ligand>
</feature>
<feature type="binding site" evidence="1">
    <location>
        <position position="121"/>
    </location>
    <ligand>
        <name>K(+)</name>
        <dbReference type="ChEBI" id="CHEBI:29103"/>
    </ligand>
</feature>
<feature type="binding site" evidence="1">
    <location>
        <position position="124"/>
    </location>
    <ligand>
        <name>ATP</name>
        <dbReference type="ChEBI" id="CHEBI:30616"/>
    </ligand>
</feature>
<feature type="binding site" evidence="1">
    <location>
        <position position="177"/>
    </location>
    <ligand>
        <name>substrate</name>
    </ligand>
</feature>
<gene>
    <name evidence="1" type="primary">coaX</name>
    <name type="ordered locus">TERTU_0867</name>
</gene>
<sequence>MKLLVDAGNSRIKWWVPECQAHGVVDRLALDDLAGEIAAVIDISKLSSVRVSCVAGKSIETQLRGELGFARDLDVKFARVSSPLPILTVAYREIHRLGVDRWLAMLAVREKFPDRFCAVLDAGSAVTVDFVTEAGVHEGGMIVPGVQTMARALWSNTSDVAVERLELVPRWCPGVDTYDCVRQGVSALYTGLVNEVHSYIDGSAERHLSPAIVVTGGDRHWFTQAFSSPVVVDPHLVLKGLLVLDELEK</sequence>
<reference key="1">
    <citation type="journal article" date="2009" name="PLoS ONE">
        <title>The complete genome of Teredinibacter turnerae T7901: an intracellular endosymbiont of marine wood-boring bivalves (shipworms).</title>
        <authorList>
            <person name="Yang J.C."/>
            <person name="Madupu R."/>
            <person name="Durkin A.S."/>
            <person name="Ekborg N.A."/>
            <person name="Pedamallu C.S."/>
            <person name="Hostetler J.B."/>
            <person name="Radune D."/>
            <person name="Toms B.S."/>
            <person name="Henrissat B."/>
            <person name="Coutinho P.M."/>
            <person name="Schwarz S."/>
            <person name="Field L."/>
            <person name="Trindade-Silva A.E."/>
            <person name="Soares C.A.G."/>
            <person name="Elshahawi S."/>
            <person name="Hanora A."/>
            <person name="Schmidt E.W."/>
            <person name="Haygood M.G."/>
            <person name="Posfai J."/>
            <person name="Benner J."/>
            <person name="Madinger C."/>
            <person name="Nove J."/>
            <person name="Anton B."/>
            <person name="Chaudhary K."/>
            <person name="Foster J."/>
            <person name="Holman A."/>
            <person name="Kumar S."/>
            <person name="Lessard P.A."/>
            <person name="Luyten Y.A."/>
            <person name="Slatko B."/>
            <person name="Wood N."/>
            <person name="Wu B."/>
            <person name="Teplitski M."/>
            <person name="Mougous J.D."/>
            <person name="Ward N."/>
            <person name="Eisen J.A."/>
            <person name="Badger J.H."/>
            <person name="Distel D.L."/>
        </authorList>
    </citation>
    <scope>NUCLEOTIDE SEQUENCE [LARGE SCALE GENOMIC DNA]</scope>
    <source>
        <strain>ATCC 39867 / T7901</strain>
    </source>
</reference>
<accession>C5BPP8</accession>
<dbReference type="EC" id="2.7.1.33" evidence="1"/>
<dbReference type="EMBL" id="CP001614">
    <property type="protein sequence ID" value="ACR13795.1"/>
    <property type="molecule type" value="Genomic_DNA"/>
</dbReference>
<dbReference type="RefSeq" id="WP_015819910.1">
    <property type="nucleotide sequence ID" value="NC_012997.1"/>
</dbReference>
<dbReference type="SMR" id="C5BPP8"/>
<dbReference type="STRING" id="377629.TERTU_0867"/>
<dbReference type="KEGG" id="ttu:TERTU_0867"/>
<dbReference type="eggNOG" id="COG1521">
    <property type="taxonomic scope" value="Bacteria"/>
</dbReference>
<dbReference type="HOGENOM" id="CLU_066627_0_0_6"/>
<dbReference type="OrthoDB" id="9781305at2"/>
<dbReference type="UniPathway" id="UPA00241">
    <property type="reaction ID" value="UER00352"/>
</dbReference>
<dbReference type="Proteomes" id="UP000009080">
    <property type="component" value="Chromosome"/>
</dbReference>
<dbReference type="GO" id="GO:0005737">
    <property type="term" value="C:cytoplasm"/>
    <property type="evidence" value="ECO:0007669"/>
    <property type="project" value="UniProtKB-SubCell"/>
</dbReference>
<dbReference type="GO" id="GO:0005524">
    <property type="term" value="F:ATP binding"/>
    <property type="evidence" value="ECO:0007669"/>
    <property type="project" value="UniProtKB-UniRule"/>
</dbReference>
<dbReference type="GO" id="GO:0046872">
    <property type="term" value="F:metal ion binding"/>
    <property type="evidence" value="ECO:0007669"/>
    <property type="project" value="UniProtKB-KW"/>
</dbReference>
<dbReference type="GO" id="GO:0004594">
    <property type="term" value="F:pantothenate kinase activity"/>
    <property type="evidence" value="ECO:0007669"/>
    <property type="project" value="UniProtKB-UniRule"/>
</dbReference>
<dbReference type="GO" id="GO:0015937">
    <property type="term" value="P:coenzyme A biosynthetic process"/>
    <property type="evidence" value="ECO:0007669"/>
    <property type="project" value="UniProtKB-UniRule"/>
</dbReference>
<dbReference type="CDD" id="cd24015">
    <property type="entry name" value="ASKHA_NBD_PanK-III"/>
    <property type="match status" value="1"/>
</dbReference>
<dbReference type="Gene3D" id="3.30.420.40">
    <property type="match status" value="2"/>
</dbReference>
<dbReference type="HAMAP" id="MF_01274">
    <property type="entry name" value="Pantothen_kinase_3"/>
    <property type="match status" value="1"/>
</dbReference>
<dbReference type="InterPro" id="IPR043129">
    <property type="entry name" value="ATPase_NBD"/>
</dbReference>
<dbReference type="InterPro" id="IPR004619">
    <property type="entry name" value="Type_III_PanK"/>
</dbReference>
<dbReference type="NCBIfam" id="TIGR00671">
    <property type="entry name" value="baf"/>
    <property type="match status" value="1"/>
</dbReference>
<dbReference type="PANTHER" id="PTHR34265">
    <property type="entry name" value="TYPE III PANTOTHENATE KINASE"/>
    <property type="match status" value="1"/>
</dbReference>
<dbReference type="PANTHER" id="PTHR34265:SF1">
    <property type="entry name" value="TYPE III PANTOTHENATE KINASE"/>
    <property type="match status" value="1"/>
</dbReference>
<dbReference type="Pfam" id="PF03309">
    <property type="entry name" value="Pan_kinase"/>
    <property type="match status" value="1"/>
</dbReference>
<dbReference type="SUPFAM" id="SSF53067">
    <property type="entry name" value="Actin-like ATPase domain"/>
    <property type="match status" value="2"/>
</dbReference>
<name>COAX_TERTT</name>
<comment type="function">
    <text evidence="1">Catalyzes the phosphorylation of pantothenate (Pan), the first step in CoA biosynthesis.</text>
</comment>
<comment type="catalytic activity">
    <reaction evidence="1">
        <text>(R)-pantothenate + ATP = (R)-4'-phosphopantothenate + ADP + H(+)</text>
        <dbReference type="Rhea" id="RHEA:16373"/>
        <dbReference type="ChEBI" id="CHEBI:10986"/>
        <dbReference type="ChEBI" id="CHEBI:15378"/>
        <dbReference type="ChEBI" id="CHEBI:29032"/>
        <dbReference type="ChEBI" id="CHEBI:30616"/>
        <dbReference type="ChEBI" id="CHEBI:456216"/>
        <dbReference type="EC" id="2.7.1.33"/>
    </reaction>
</comment>
<comment type="cofactor">
    <cofactor evidence="1">
        <name>NH4(+)</name>
        <dbReference type="ChEBI" id="CHEBI:28938"/>
    </cofactor>
    <cofactor evidence="1">
        <name>K(+)</name>
        <dbReference type="ChEBI" id="CHEBI:29103"/>
    </cofactor>
    <text evidence="1">A monovalent cation. Ammonium or potassium.</text>
</comment>
<comment type="pathway">
    <text evidence="1">Cofactor biosynthesis; coenzyme A biosynthesis; CoA from (R)-pantothenate: step 1/5.</text>
</comment>
<comment type="subunit">
    <text evidence="1">Homodimer.</text>
</comment>
<comment type="subcellular location">
    <subcellularLocation>
        <location evidence="1">Cytoplasm</location>
    </subcellularLocation>
</comment>
<comment type="similarity">
    <text evidence="1">Belongs to the type III pantothenate kinase family.</text>
</comment>
<protein>
    <recommendedName>
        <fullName evidence="1">Type III pantothenate kinase</fullName>
        <ecNumber evidence="1">2.7.1.33</ecNumber>
    </recommendedName>
    <alternativeName>
        <fullName evidence="1">PanK-III</fullName>
    </alternativeName>
    <alternativeName>
        <fullName evidence="1">Pantothenic acid kinase</fullName>
    </alternativeName>
</protein>
<organism>
    <name type="scientific">Teredinibacter turnerae (strain ATCC 39867 / T7901)</name>
    <dbReference type="NCBI Taxonomy" id="377629"/>
    <lineage>
        <taxon>Bacteria</taxon>
        <taxon>Pseudomonadati</taxon>
        <taxon>Pseudomonadota</taxon>
        <taxon>Gammaproteobacteria</taxon>
        <taxon>Cellvibrionales</taxon>
        <taxon>Cellvibrionaceae</taxon>
        <taxon>Teredinibacter</taxon>
    </lineage>
</organism>